<proteinExistence type="inferred from homology"/>
<dbReference type="EMBL" id="CP000605">
    <property type="protein sequence ID" value="ACD98882.1"/>
    <property type="molecule type" value="Genomic_DNA"/>
</dbReference>
<dbReference type="RefSeq" id="WP_007051768.1">
    <property type="nucleotide sequence ID" value="NZ_AABM02000008.1"/>
</dbReference>
<dbReference type="SMR" id="B3DP23"/>
<dbReference type="GeneID" id="69579149"/>
<dbReference type="KEGG" id="blj:BLD_1437"/>
<dbReference type="HOGENOM" id="CLU_129938_2_1_11"/>
<dbReference type="Proteomes" id="UP000002419">
    <property type="component" value="Chromosome"/>
</dbReference>
<dbReference type="GO" id="GO:1990904">
    <property type="term" value="C:ribonucleoprotein complex"/>
    <property type="evidence" value="ECO:0007669"/>
    <property type="project" value="UniProtKB-KW"/>
</dbReference>
<dbReference type="GO" id="GO:0005840">
    <property type="term" value="C:ribosome"/>
    <property type="evidence" value="ECO:0007669"/>
    <property type="project" value="UniProtKB-KW"/>
</dbReference>
<dbReference type="GO" id="GO:0003735">
    <property type="term" value="F:structural constituent of ribosome"/>
    <property type="evidence" value="ECO:0007669"/>
    <property type="project" value="InterPro"/>
</dbReference>
<dbReference type="GO" id="GO:0006412">
    <property type="term" value="P:translation"/>
    <property type="evidence" value="ECO:0007669"/>
    <property type="project" value="UniProtKB-UniRule"/>
</dbReference>
<dbReference type="FunFam" id="1.10.287.3980:FF:000001">
    <property type="entry name" value="Mitochondrial ribosomal protein L34"/>
    <property type="match status" value="1"/>
</dbReference>
<dbReference type="Gene3D" id="1.10.287.3980">
    <property type="match status" value="1"/>
</dbReference>
<dbReference type="HAMAP" id="MF_00391">
    <property type="entry name" value="Ribosomal_bL34"/>
    <property type="match status" value="1"/>
</dbReference>
<dbReference type="InterPro" id="IPR000271">
    <property type="entry name" value="Ribosomal_bL34"/>
</dbReference>
<dbReference type="InterPro" id="IPR020939">
    <property type="entry name" value="Ribosomal_bL34_CS"/>
</dbReference>
<dbReference type="NCBIfam" id="TIGR01030">
    <property type="entry name" value="rpmH_bact"/>
    <property type="match status" value="1"/>
</dbReference>
<dbReference type="PANTHER" id="PTHR14503:SF4">
    <property type="entry name" value="LARGE RIBOSOMAL SUBUNIT PROTEIN BL34M"/>
    <property type="match status" value="1"/>
</dbReference>
<dbReference type="PANTHER" id="PTHR14503">
    <property type="entry name" value="MITOCHONDRIAL RIBOSOMAL PROTEIN 34 FAMILY MEMBER"/>
    <property type="match status" value="1"/>
</dbReference>
<dbReference type="Pfam" id="PF00468">
    <property type="entry name" value="Ribosomal_L34"/>
    <property type="match status" value="1"/>
</dbReference>
<dbReference type="PROSITE" id="PS00784">
    <property type="entry name" value="RIBOSOMAL_L34"/>
    <property type="match status" value="1"/>
</dbReference>
<protein>
    <recommendedName>
        <fullName evidence="1">Large ribosomal subunit protein bL34</fullName>
    </recommendedName>
    <alternativeName>
        <fullName evidence="2">50S ribosomal protein L34</fullName>
    </alternativeName>
</protein>
<organism>
    <name type="scientific">Bifidobacterium longum (strain DJO10A)</name>
    <dbReference type="NCBI Taxonomy" id="205913"/>
    <lineage>
        <taxon>Bacteria</taxon>
        <taxon>Bacillati</taxon>
        <taxon>Actinomycetota</taxon>
        <taxon>Actinomycetes</taxon>
        <taxon>Bifidobacteriales</taxon>
        <taxon>Bifidobacteriaceae</taxon>
        <taxon>Bifidobacterium</taxon>
    </lineage>
</organism>
<comment type="similarity">
    <text evidence="1">Belongs to the bacterial ribosomal protein bL34 family.</text>
</comment>
<accession>B3DP23</accession>
<gene>
    <name evidence="1" type="primary">rpmH</name>
    <name type="ordered locus">BLD_1437</name>
</gene>
<name>RL34_BIFLD</name>
<keyword id="KW-0687">Ribonucleoprotein</keyword>
<keyword id="KW-0689">Ribosomal protein</keyword>
<feature type="chain" id="PRO_1000122898" description="Large ribosomal subunit protein bL34">
    <location>
        <begin position="1"/>
        <end position="44"/>
    </location>
</feature>
<evidence type="ECO:0000255" key="1">
    <source>
        <dbReference type="HAMAP-Rule" id="MF_00391"/>
    </source>
</evidence>
<evidence type="ECO:0000305" key="2"/>
<reference key="1">
    <citation type="journal article" date="2008" name="BMC Genomics">
        <title>Comparative genomic analysis of the gut bacterium Bifidobacterium longum reveals loci susceptible to deletion during pure culture growth.</title>
        <authorList>
            <person name="Lee J.H."/>
            <person name="Karamychev V.N."/>
            <person name="Kozyavkin S.A."/>
            <person name="Mills D."/>
            <person name="Pavlov A.R."/>
            <person name="Pavlova N.V."/>
            <person name="Polouchine N.N."/>
            <person name="Richardson P.M."/>
            <person name="Shakhova V.V."/>
            <person name="Slesarev A.I."/>
            <person name="Weimer B."/>
            <person name="O'Sullivan D.J."/>
        </authorList>
    </citation>
    <scope>NUCLEOTIDE SEQUENCE [LARGE SCALE GENOMIC DNA]</scope>
    <source>
        <strain>DJO10A</strain>
    </source>
</reference>
<sequence>MKRTFQPNNRRRHMKHGFRLRMRTRSGRAVINRRRAKGRKTLSA</sequence>